<keyword id="KW-0143">Chaperone</keyword>
<keyword id="KW-0963">Cytoplasm</keyword>
<keyword id="KW-0235">DNA replication</keyword>
<keyword id="KW-0479">Metal-binding</keyword>
<keyword id="KW-0677">Repeat</keyword>
<keyword id="KW-0346">Stress response</keyword>
<keyword id="KW-0862">Zinc</keyword>
<keyword id="KW-0863">Zinc-finger</keyword>
<reference key="1">
    <citation type="submission" date="2007-05" db="EMBL/GenBank/DDBJ databases">
        <title>Complete sequence of Pseudomonas putida F1.</title>
        <authorList>
            <consortium name="US DOE Joint Genome Institute"/>
            <person name="Copeland A."/>
            <person name="Lucas S."/>
            <person name="Lapidus A."/>
            <person name="Barry K."/>
            <person name="Detter J.C."/>
            <person name="Glavina del Rio T."/>
            <person name="Hammon N."/>
            <person name="Israni S."/>
            <person name="Dalin E."/>
            <person name="Tice H."/>
            <person name="Pitluck S."/>
            <person name="Chain P."/>
            <person name="Malfatti S."/>
            <person name="Shin M."/>
            <person name="Vergez L."/>
            <person name="Schmutz J."/>
            <person name="Larimer F."/>
            <person name="Land M."/>
            <person name="Hauser L."/>
            <person name="Kyrpides N."/>
            <person name="Lykidis A."/>
            <person name="Parales R."/>
            <person name="Richardson P."/>
        </authorList>
    </citation>
    <scope>NUCLEOTIDE SEQUENCE [LARGE SCALE GENOMIC DNA]</scope>
    <source>
        <strain>ATCC 700007 / DSM 6899 / JCM 31910 / BCRC 17059 / LMG 24140 / F1</strain>
    </source>
</reference>
<organism>
    <name type="scientific">Pseudomonas putida (strain ATCC 700007 / DSM 6899 / JCM 31910 / BCRC 17059 / LMG 24140 / F1)</name>
    <dbReference type="NCBI Taxonomy" id="351746"/>
    <lineage>
        <taxon>Bacteria</taxon>
        <taxon>Pseudomonadati</taxon>
        <taxon>Pseudomonadota</taxon>
        <taxon>Gammaproteobacteria</taxon>
        <taxon>Pseudomonadales</taxon>
        <taxon>Pseudomonadaceae</taxon>
        <taxon>Pseudomonas</taxon>
    </lineage>
</organism>
<accession>A5W9A2</accession>
<gene>
    <name evidence="1" type="primary">dnaJ</name>
    <name type="ordered locus">Pput_4592</name>
</gene>
<sequence length="374" mass="40124">MSKRDYYEVLGVERGATEADLKKAYRRLAMKYHPDRNPGDKESEDKFKEANEAYEVLSDASKRAAFDQYGHAGVDPSMGGGGAGFGGANFSDIFGDVFSDFFGGGRGGGRGGAQRGSDLRYTLELNLEEAVRGTTVSIRVPTLVNCQPCDGSGAKKGSTPSTCPTCGGIGQVRMQQGFFSVQQTCPRCHGQGKIITDPCTSCHGEGRVEEYKTLSVKVPAGVDTGDRIRLSGEGEAGTHGGPTGDLYVVISVREHEIFQRDGKHLYCEVPISYTDAALGGELEVPTLDGRVKLKIPEGTQTGKQFRLRGKGVAPVRGGGAGDLLCRVAVETPVNLSRRQRELLEELRDSLEGDSSHSPKASGWFDGVKRFFGDL</sequence>
<comment type="function">
    <text evidence="1">Participates actively in the response to hyperosmotic and heat shock by preventing the aggregation of stress-denatured proteins and by disaggregating proteins, also in an autonomous, DnaK-independent fashion. Unfolded proteins bind initially to DnaJ; upon interaction with the DnaJ-bound protein, DnaK hydrolyzes its bound ATP, resulting in the formation of a stable complex. GrpE releases ADP from DnaK; ATP binding to DnaK triggers the release of the substrate protein, thus completing the reaction cycle. Several rounds of ATP-dependent interactions between DnaJ, DnaK and GrpE are required for fully efficient folding. Also involved, together with DnaK and GrpE, in the DNA replication of plasmids through activation of initiation proteins.</text>
</comment>
<comment type="cofactor">
    <cofactor evidence="1">
        <name>Zn(2+)</name>
        <dbReference type="ChEBI" id="CHEBI:29105"/>
    </cofactor>
    <text evidence="1">Binds 2 Zn(2+) ions per monomer.</text>
</comment>
<comment type="subunit">
    <text evidence="1">Homodimer.</text>
</comment>
<comment type="subcellular location">
    <subcellularLocation>
        <location evidence="1">Cytoplasm</location>
    </subcellularLocation>
</comment>
<comment type="domain">
    <text evidence="1">The J domain is necessary and sufficient to stimulate DnaK ATPase activity. Zinc center 1 plays an important role in the autonomous, DnaK-independent chaperone activity of DnaJ. Zinc center 2 is essential for interaction with DnaK and for DnaJ activity.</text>
</comment>
<comment type="similarity">
    <text evidence="1">Belongs to the DnaJ family.</text>
</comment>
<evidence type="ECO:0000255" key="1">
    <source>
        <dbReference type="HAMAP-Rule" id="MF_01152"/>
    </source>
</evidence>
<protein>
    <recommendedName>
        <fullName evidence="1">Chaperone protein DnaJ</fullName>
    </recommendedName>
</protein>
<name>DNAJ_PSEP1</name>
<dbReference type="EMBL" id="CP000712">
    <property type="protein sequence ID" value="ABQ80712.1"/>
    <property type="molecule type" value="Genomic_DNA"/>
</dbReference>
<dbReference type="SMR" id="A5W9A2"/>
<dbReference type="KEGG" id="ppf:Pput_4592"/>
<dbReference type="eggNOG" id="COG0484">
    <property type="taxonomic scope" value="Bacteria"/>
</dbReference>
<dbReference type="HOGENOM" id="CLU_017633_0_7_6"/>
<dbReference type="GO" id="GO:0005737">
    <property type="term" value="C:cytoplasm"/>
    <property type="evidence" value="ECO:0007669"/>
    <property type="project" value="UniProtKB-SubCell"/>
</dbReference>
<dbReference type="GO" id="GO:0005524">
    <property type="term" value="F:ATP binding"/>
    <property type="evidence" value="ECO:0007669"/>
    <property type="project" value="InterPro"/>
</dbReference>
<dbReference type="GO" id="GO:0031072">
    <property type="term" value="F:heat shock protein binding"/>
    <property type="evidence" value="ECO:0007669"/>
    <property type="project" value="InterPro"/>
</dbReference>
<dbReference type="GO" id="GO:0051082">
    <property type="term" value="F:unfolded protein binding"/>
    <property type="evidence" value="ECO:0007669"/>
    <property type="project" value="UniProtKB-UniRule"/>
</dbReference>
<dbReference type="GO" id="GO:0008270">
    <property type="term" value="F:zinc ion binding"/>
    <property type="evidence" value="ECO:0007669"/>
    <property type="project" value="UniProtKB-UniRule"/>
</dbReference>
<dbReference type="GO" id="GO:0051085">
    <property type="term" value="P:chaperone cofactor-dependent protein refolding"/>
    <property type="evidence" value="ECO:0007669"/>
    <property type="project" value="TreeGrafter"/>
</dbReference>
<dbReference type="GO" id="GO:0006260">
    <property type="term" value="P:DNA replication"/>
    <property type="evidence" value="ECO:0007669"/>
    <property type="project" value="UniProtKB-KW"/>
</dbReference>
<dbReference type="GO" id="GO:0042026">
    <property type="term" value="P:protein refolding"/>
    <property type="evidence" value="ECO:0007669"/>
    <property type="project" value="TreeGrafter"/>
</dbReference>
<dbReference type="GO" id="GO:0009408">
    <property type="term" value="P:response to heat"/>
    <property type="evidence" value="ECO:0007669"/>
    <property type="project" value="InterPro"/>
</dbReference>
<dbReference type="CDD" id="cd06257">
    <property type="entry name" value="DnaJ"/>
    <property type="match status" value="1"/>
</dbReference>
<dbReference type="CDD" id="cd10747">
    <property type="entry name" value="DnaJ_C"/>
    <property type="match status" value="1"/>
</dbReference>
<dbReference type="CDD" id="cd10719">
    <property type="entry name" value="DnaJ_zf"/>
    <property type="match status" value="1"/>
</dbReference>
<dbReference type="FunFam" id="1.10.287.110:FF:000051">
    <property type="entry name" value="Molecular chaperone DnaJ"/>
    <property type="match status" value="1"/>
</dbReference>
<dbReference type="FunFam" id="2.10.230.10:FF:000002">
    <property type="entry name" value="Molecular chaperone DnaJ"/>
    <property type="match status" value="1"/>
</dbReference>
<dbReference type="FunFam" id="2.60.260.20:FF:000004">
    <property type="entry name" value="Molecular chaperone DnaJ"/>
    <property type="match status" value="1"/>
</dbReference>
<dbReference type="Gene3D" id="1.10.287.110">
    <property type="entry name" value="DnaJ domain"/>
    <property type="match status" value="1"/>
</dbReference>
<dbReference type="Gene3D" id="2.10.230.10">
    <property type="entry name" value="Heat shock protein DnaJ, cysteine-rich domain"/>
    <property type="match status" value="1"/>
</dbReference>
<dbReference type="Gene3D" id="2.60.260.20">
    <property type="entry name" value="Urease metallochaperone UreE, N-terminal domain"/>
    <property type="match status" value="2"/>
</dbReference>
<dbReference type="HAMAP" id="MF_01152">
    <property type="entry name" value="DnaJ"/>
    <property type="match status" value="1"/>
</dbReference>
<dbReference type="InterPro" id="IPR012724">
    <property type="entry name" value="DnaJ"/>
</dbReference>
<dbReference type="InterPro" id="IPR002939">
    <property type="entry name" value="DnaJ_C"/>
</dbReference>
<dbReference type="InterPro" id="IPR001623">
    <property type="entry name" value="DnaJ_domain"/>
</dbReference>
<dbReference type="InterPro" id="IPR018253">
    <property type="entry name" value="DnaJ_domain_CS"/>
</dbReference>
<dbReference type="InterPro" id="IPR008971">
    <property type="entry name" value="HSP40/DnaJ_pept-bd"/>
</dbReference>
<dbReference type="InterPro" id="IPR001305">
    <property type="entry name" value="HSP_DnaJ_Cys-rich_dom"/>
</dbReference>
<dbReference type="InterPro" id="IPR036410">
    <property type="entry name" value="HSP_DnaJ_Cys-rich_dom_sf"/>
</dbReference>
<dbReference type="InterPro" id="IPR036869">
    <property type="entry name" value="J_dom_sf"/>
</dbReference>
<dbReference type="NCBIfam" id="TIGR02349">
    <property type="entry name" value="DnaJ_bact"/>
    <property type="match status" value="1"/>
</dbReference>
<dbReference type="NCBIfam" id="NF008035">
    <property type="entry name" value="PRK10767.1"/>
    <property type="match status" value="1"/>
</dbReference>
<dbReference type="PANTHER" id="PTHR43096:SF48">
    <property type="entry name" value="CHAPERONE PROTEIN DNAJ"/>
    <property type="match status" value="1"/>
</dbReference>
<dbReference type="PANTHER" id="PTHR43096">
    <property type="entry name" value="DNAJ HOMOLOG 1, MITOCHONDRIAL-RELATED"/>
    <property type="match status" value="1"/>
</dbReference>
<dbReference type="Pfam" id="PF00226">
    <property type="entry name" value="DnaJ"/>
    <property type="match status" value="1"/>
</dbReference>
<dbReference type="Pfam" id="PF01556">
    <property type="entry name" value="DnaJ_C"/>
    <property type="match status" value="1"/>
</dbReference>
<dbReference type="Pfam" id="PF00684">
    <property type="entry name" value="DnaJ_CXXCXGXG"/>
    <property type="match status" value="1"/>
</dbReference>
<dbReference type="PRINTS" id="PR00625">
    <property type="entry name" value="JDOMAIN"/>
</dbReference>
<dbReference type="SMART" id="SM00271">
    <property type="entry name" value="DnaJ"/>
    <property type="match status" value="1"/>
</dbReference>
<dbReference type="SUPFAM" id="SSF46565">
    <property type="entry name" value="Chaperone J-domain"/>
    <property type="match status" value="1"/>
</dbReference>
<dbReference type="SUPFAM" id="SSF57938">
    <property type="entry name" value="DnaJ/Hsp40 cysteine-rich domain"/>
    <property type="match status" value="1"/>
</dbReference>
<dbReference type="SUPFAM" id="SSF49493">
    <property type="entry name" value="HSP40/DnaJ peptide-binding domain"/>
    <property type="match status" value="2"/>
</dbReference>
<dbReference type="PROSITE" id="PS00636">
    <property type="entry name" value="DNAJ_1"/>
    <property type="match status" value="1"/>
</dbReference>
<dbReference type="PROSITE" id="PS50076">
    <property type="entry name" value="DNAJ_2"/>
    <property type="match status" value="1"/>
</dbReference>
<dbReference type="PROSITE" id="PS51188">
    <property type="entry name" value="ZF_CR"/>
    <property type="match status" value="1"/>
</dbReference>
<feature type="chain" id="PRO_1000085254" description="Chaperone protein DnaJ">
    <location>
        <begin position="1"/>
        <end position="374"/>
    </location>
</feature>
<feature type="domain" description="J" evidence="1">
    <location>
        <begin position="5"/>
        <end position="70"/>
    </location>
</feature>
<feature type="repeat" description="CXXCXGXG motif">
    <location>
        <begin position="146"/>
        <end position="153"/>
    </location>
</feature>
<feature type="repeat" description="CXXCXGXG motif">
    <location>
        <begin position="163"/>
        <end position="170"/>
    </location>
</feature>
<feature type="repeat" description="CXXCXGXG motif">
    <location>
        <begin position="185"/>
        <end position="192"/>
    </location>
</feature>
<feature type="repeat" description="CXXCXGXG motif">
    <location>
        <begin position="199"/>
        <end position="206"/>
    </location>
</feature>
<feature type="zinc finger region" description="CR-type" evidence="1">
    <location>
        <begin position="133"/>
        <end position="211"/>
    </location>
</feature>
<feature type="binding site" evidence="1">
    <location>
        <position position="146"/>
    </location>
    <ligand>
        <name>Zn(2+)</name>
        <dbReference type="ChEBI" id="CHEBI:29105"/>
        <label>1</label>
    </ligand>
</feature>
<feature type="binding site" evidence="1">
    <location>
        <position position="149"/>
    </location>
    <ligand>
        <name>Zn(2+)</name>
        <dbReference type="ChEBI" id="CHEBI:29105"/>
        <label>1</label>
    </ligand>
</feature>
<feature type="binding site" evidence="1">
    <location>
        <position position="163"/>
    </location>
    <ligand>
        <name>Zn(2+)</name>
        <dbReference type="ChEBI" id="CHEBI:29105"/>
        <label>2</label>
    </ligand>
</feature>
<feature type="binding site" evidence="1">
    <location>
        <position position="166"/>
    </location>
    <ligand>
        <name>Zn(2+)</name>
        <dbReference type="ChEBI" id="CHEBI:29105"/>
        <label>2</label>
    </ligand>
</feature>
<feature type="binding site" evidence="1">
    <location>
        <position position="185"/>
    </location>
    <ligand>
        <name>Zn(2+)</name>
        <dbReference type="ChEBI" id="CHEBI:29105"/>
        <label>2</label>
    </ligand>
</feature>
<feature type="binding site" evidence="1">
    <location>
        <position position="188"/>
    </location>
    <ligand>
        <name>Zn(2+)</name>
        <dbReference type="ChEBI" id="CHEBI:29105"/>
        <label>2</label>
    </ligand>
</feature>
<feature type="binding site" evidence="1">
    <location>
        <position position="199"/>
    </location>
    <ligand>
        <name>Zn(2+)</name>
        <dbReference type="ChEBI" id="CHEBI:29105"/>
        <label>1</label>
    </ligand>
</feature>
<feature type="binding site" evidence="1">
    <location>
        <position position="202"/>
    </location>
    <ligand>
        <name>Zn(2+)</name>
        <dbReference type="ChEBI" id="CHEBI:29105"/>
        <label>1</label>
    </ligand>
</feature>
<proteinExistence type="inferred from homology"/>